<protein>
    <recommendedName>
        <fullName evidence="1">Endo-type membrane-bound lytic murein transglycosylase A</fullName>
        <ecNumber evidence="1">4.2.2.n2</ecNumber>
    </recommendedName>
    <alternativeName>
        <fullName evidence="1">Peptidoglycan lytic endotransglycosylase</fullName>
    </alternativeName>
</protein>
<sequence>MKLRWFAFLVVILAGCSSKQDYRNPPWNAEVPVKRAMQWMPISEKAGAAWGVDPHLITAIIAIESGGNPNAVSKSNAIGLMQLKASTSGRDVYRRMGWRGEPTTSELKNPERNISMGAAYLSILENGPLAGIKDPQVMQYALVVSYANGAGALLRTFSSDRKKAIEKINDLDADEFFEHVVDNHPAPQAPRYIWKLQQALDAM</sequence>
<gene>
    <name evidence="1" type="primary">emtA</name>
    <name type="ordered locus">SSPA1003</name>
</gene>
<feature type="signal peptide" evidence="1">
    <location>
        <begin position="1"/>
        <end position="15"/>
    </location>
</feature>
<feature type="chain" id="PRO_1000144960" description="Endo-type membrane-bound lytic murein transglycosylase A">
    <location>
        <begin position="16"/>
        <end position="203"/>
    </location>
</feature>
<feature type="lipid moiety-binding region" description="N-palmitoyl cysteine" evidence="1">
    <location>
        <position position="16"/>
    </location>
</feature>
<feature type="lipid moiety-binding region" description="S-diacylglycerol cysteine" evidence="1">
    <location>
        <position position="16"/>
    </location>
</feature>
<accession>B5BI54</accession>
<evidence type="ECO:0000255" key="1">
    <source>
        <dbReference type="HAMAP-Rule" id="MF_01381"/>
    </source>
</evidence>
<keyword id="KW-0998">Cell outer membrane</keyword>
<keyword id="KW-0961">Cell wall biogenesis/degradation</keyword>
<keyword id="KW-0449">Lipoprotein</keyword>
<keyword id="KW-0456">Lyase</keyword>
<keyword id="KW-0472">Membrane</keyword>
<keyword id="KW-0564">Palmitate</keyword>
<keyword id="KW-0732">Signal</keyword>
<comment type="function">
    <text evidence="1">Murein-degrading enzyme. May play a role in recycling of muropeptides during cell elongation and/or cell division. Preferentially cleaves at a distance of more than two disaccharide units from the ends of the glycan chain.</text>
</comment>
<comment type="catalytic activity">
    <reaction evidence="1">
        <text>Endolytic cleavage of the (1-&gt;4)-beta-glycosidic linkage between N-acetylmuramic acid (MurNAc) and N-acetylglucosamine (GlcNAc) residues in peptidoglycan with concomitant formation of a 1,6-anhydrobond in the MurNAc residue.</text>
        <dbReference type="EC" id="4.2.2.n2"/>
    </reaction>
</comment>
<comment type="subcellular location">
    <subcellularLocation>
        <location evidence="1">Cell outer membrane</location>
        <topology evidence="1">Lipid-anchor</topology>
    </subcellularLocation>
</comment>
<comment type="similarity">
    <text evidence="1">Belongs to the transglycosylase Slt family.</text>
</comment>
<reference key="1">
    <citation type="journal article" date="2009" name="BMC Genomics">
        <title>Pseudogene accumulation in the evolutionary histories of Salmonella enterica serovars Paratyphi A and Typhi.</title>
        <authorList>
            <person name="Holt K.E."/>
            <person name="Thomson N.R."/>
            <person name="Wain J."/>
            <person name="Langridge G.C."/>
            <person name="Hasan R."/>
            <person name="Bhutta Z.A."/>
            <person name="Quail M.A."/>
            <person name="Norbertczak H."/>
            <person name="Walker D."/>
            <person name="Simmonds M."/>
            <person name="White B."/>
            <person name="Bason N."/>
            <person name="Mungall K."/>
            <person name="Dougan G."/>
            <person name="Parkhill J."/>
        </authorList>
    </citation>
    <scope>NUCLEOTIDE SEQUENCE [LARGE SCALE GENOMIC DNA]</scope>
    <source>
        <strain>AKU_12601</strain>
    </source>
</reference>
<proteinExistence type="inferred from homology"/>
<name>EMTA_SALPK</name>
<dbReference type="EC" id="4.2.2.n2" evidence="1"/>
<dbReference type="EMBL" id="FM200053">
    <property type="protein sequence ID" value="CAR59154.1"/>
    <property type="molecule type" value="Genomic_DNA"/>
</dbReference>
<dbReference type="RefSeq" id="WP_000776974.1">
    <property type="nucleotide sequence ID" value="NC_011147.1"/>
</dbReference>
<dbReference type="SMR" id="B5BI54"/>
<dbReference type="CAZy" id="GH23">
    <property type="family name" value="Glycoside Hydrolase Family 23"/>
</dbReference>
<dbReference type="KEGG" id="sek:SSPA1003"/>
<dbReference type="HOGENOM" id="CLU_103257_0_0_6"/>
<dbReference type="Proteomes" id="UP000001869">
    <property type="component" value="Chromosome"/>
</dbReference>
<dbReference type="GO" id="GO:0009279">
    <property type="term" value="C:cell outer membrane"/>
    <property type="evidence" value="ECO:0007669"/>
    <property type="project" value="UniProtKB-SubCell"/>
</dbReference>
<dbReference type="GO" id="GO:0008932">
    <property type="term" value="F:lytic endotransglycosylase activity"/>
    <property type="evidence" value="ECO:0007669"/>
    <property type="project" value="InterPro"/>
</dbReference>
<dbReference type="GO" id="GO:0016998">
    <property type="term" value="P:cell wall macromolecule catabolic process"/>
    <property type="evidence" value="ECO:0007669"/>
    <property type="project" value="UniProtKB-UniRule"/>
</dbReference>
<dbReference type="GO" id="GO:0071555">
    <property type="term" value="P:cell wall organization"/>
    <property type="evidence" value="ECO:0007669"/>
    <property type="project" value="UniProtKB-KW"/>
</dbReference>
<dbReference type="GO" id="GO:0000270">
    <property type="term" value="P:peptidoglycan metabolic process"/>
    <property type="evidence" value="ECO:0007669"/>
    <property type="project" value="InterPro"/>
</dbReference>
<dbReference type="CDD" id="cd16893">
    <property type="entry name" value="LT_MltC_MltE"/>
    <property type="match status" value="1"/>
</dbReference>
<dbReference type="Gene3D" id="1.10.530.10">
    <property type="match status" value="1"/>
</dbReference>
<dbReference type="HAMAP" id="MF_01381">
    <property type="entry name" value="EmtA"/>
    <property type="match status" value="1"/>
</dbReference>
<dbReference type="InterPro" id="IPR023946">
    <property type="entry name" value="EmtA"/>
</dbReference>
<dbReference type="InterPro" id="IPR023346">
    <property type="entry name" value="Lysozyme-like_dom_sf"/>
</dbReference>
<dbReference type="InterPro" id="IPR000189">
    <property type="entry name" value="Transglyc_AS"/>
</dbReference>
<dbReference type="InterPro" id="IPR008258">
    <property type="entry name" value="Transglycosylase_SLT_dom_1"/>
</dbReference>
<dbReference type="NCBIfam" id="NF012014">
    <property type="entry name" value="PRK15470.1"/>
    <property type="match status" value="1"/>
</dbReference>
<dbReference type="PANTHER" id="PTHR37423:SF4">
    <property type="entry name" value="ENDO-TYPE MEMBRANE-BOUND LYTIC MUREIN TRANSGLYCOSYLASE A"/>
    <property type="match status" value="1"/>
</dbReference>
<dbReference type="PANTHER" id="PTHR37423">
    <property type="entry name" value="SOLUBLE LYTIC MUREIN TRANSGLYCOSYLASE-RELATED"/>
    <property type="match status" value="1"/>
</dbReference>
<dbReference type="Pfam" id="PF01464">
    <property type="entry name" value="SLT"/>
    <property type="match status" value="1"/>
</dbReference>
<dbReference type="SUPFAM" id="SSF53955">
    <property type="entry name" value="Lysozyme-like"/>
    <property type="match status" value="1"/>
</dbReference>
<dbReference type="PROSITE" id="PS51257">
    <property type="entry name" value="PROKAR_LIPOPROTEIN"/>
    <property type="match status" value="1"/>
</dbReference>
<dbReference type="PROSITE" id="PS00922">
    <property type="entry name" value="TRANSGLYCOSYLASE"/>
    <property type="match status" value="1"/>
</dbReference>
<organism>
    <name type="scientific">Salmonella paratyphi A (strain AKU_12601)</name>
    <dbReference type="NCBI Taxonomy" id="554290"/>
    <lineage>
        <taxon>Bacteria</taxon>
        <taxon>Pseudomonadati</taxon>
        <taxon>Pseudomonadota</taxon>
        <taxon>Gammaproteobacteria</taxon>
        <taxon>Enterobacterales</taxon>
        <taxon>Enterobacteriaceae</taxon>
        <taxon>Salmonella</taxon>
    </lineage>
</organism>